<dbReference type="EMBL" id="AL009126">
    <property type="protein sequence ID" value="CAB13218.1"/>
    <property type="molecule type" value="Genomic_DNA"/>
</dbReference>
<dbReference type="PIR" id="D69861">
    <property type="entry name" value="D69861"/>
</dbReference>
<dbReference type="RefSeq" id="NP_389228.1">
    <property type="nucleotide sequence ID" value="NC_000964.3"/>
</dbReference>
<dbReference type="RefSeq" id="WP_003245855.1">
    <property type="nucleotide sequence ID" value="NZ_OZ025638.1"/>
</dbReference>
<dbReference type="SMR" id="O31654"/>
<dbReference type="FunCoup" id="O31654">
    <property type="interactions" value="60"/>
</dbReference>
<dbReference type="IntAct" id="O31654">
    <property type="interactions" value="1"/>
</dbReference>
<dbReference type="STRING" id="224308.BSU13450"/>
<dbReference type="PaxDb" id="224308-BSU13450"/>
<dbReference type="EnsemblBacteria" id="CAB13218">
    <property type="protein sequence ID" value="CAB13218"/>
    <property type="gene ID" value="BSU_13450"/>
</dbReference>
<dbReference type="GeneID" id="86874162"/>
<dbReference type="GeneID" id="939363"/>
<dbReference type="KEGG" id="bsu:BSU13450"/>
<dbReference type="PATRIC" id="fig|224308.179.peg.1460"/>
<dbReference type="eggNOG" id="COG1191">
    <property type="taxonomic scope" value="Bacteria"/>
</dbReference>
<dbReference type="InParanoid" id="O31654"/>
<dbReference type="OrthoDB" id="3190733at2"/>
<dbReference type="PhylomeDB" id="O31654"/>
<dbReference type="BioCyc" id="BSUB:BSU13450-MONOMER"/>
<dbReference type="Proteomes" id="UP000001570">
    <property type="component" value="Chromosome"/>
</dbReference>
<dbReference type="GO" id="GO:0005737">
    <property type="term" value="C:cytoplasm"/>
    <property type="evidence" value="ECO:0007669"/>
    <property type="project" value="UniProtKB-SubCell"/>
</dbReference>
<dbReference type="GO" id="GO:0003677">
    <property type="term" value="F:DNA binding"/>
    <property type="evidence" value="ECO:0007669"/>
    <property type="project" value="UniProtKB-UniRule"/>
</dbReference>
<dbReference type="GO" id="GO:0016987">
    <property type="term" value="F:sigma factor activity"/>
    <property type="evidence" value="ECO:0000318"/>
    <property type="project" value="GO_Central"/>
</dbReference>
<dbReference type="GO" id="GO:0006352">
    <property type="term" value="P:DNA-templated transcription initiation"/>
    <property type="evidence" value="ECO:0007669"/>
    <property type="project" value="UniProtKB-UniRule"/>
</dbReference>
<dbReference type="GO" id="GO:0006355">
    <property type="term" value="P:regulation of DNA-templated transcription"/>
    <property type="evidence" value="ECO:0000318"/>
    <property type="project" value="GO_Central"/>
</dbReference>
<dbReference type="Gene3D" id="1.10.1740.10">
    <property type="match status" value="1"/>
</dbReference>
<dbReference type="HAMAP" id="MF_02064">
    <property type="entry name" value="Sigma70_SigI"/>
    <property type="match status" value="1"/>
</dbReference>
<dbReference type="InterPro" id="IPR014284">
    <property type="entry name" value="RNA_pol_sigma-70_dom"/>
</dbReference>
<dbReference type="InterPro" id="IPR014244">
    <property type="entry name" value="RNA_pol_sigma-I"/>
</dbReference>
<dbReference type="InterPro" id="IPR007627">
    <property type="entry name" value="RNA_pol_sigma70_r2"/>
</dbReference>
<dbReference type="InterPro" id="IPR013325">
    <property type="entry name" value="RNA_pol_sigma_r2"/>
</dbReference>
<dbReference type="NCBIfam" id="NF006172">
    <property type="entry name" value="PRK08311.1-3"/>
    <property type="match status" value="1"/>
</dbReference>
<dbReference type="NCBIfam" id="TIGR02937">
    <property type="entry name" value="sigma70-ECF"/>
    <property type="match status" value="1"/>
</dbReference>
<dbReference type="NCBIfam" id="TIGR02895">
    <property type="entry name" value="spore_sigI"/>
    <property type="match status" value="1"/>
</dbReference>
<dbReference type="PANTHER" id="PTHR30385:SF6">
    <property type="entry name" value="RNA POLYMERASE SIGMA FACTOR SIGI"/>
    <property type="match status" value="1"/>
</dbReference>
<dbReference type="PANTHER" id="PTHR30385">
    <property type="entry name" value="SIGMA FACTOR F FLAGELLAR"/>
    <property type="match status" value="1"/>
</dbReference>
<dbReference type="Pfam" id="PF04542">
    <property type="entry name" value="Sigma70_r2"/>
    <property type="match status" value="1"/>
</dbReference>
<dbReference type="PIRSF" id="PIRSF038953">
    <property type="entry name" value="SigI"/>
    <property type="match status" value="1"/>
</dbReference>
<dbReference type="SUPFAM" id="SSF88946">
    <property type="entry name" value="Sigma2 domain of RNA polymerase sigma factors"/>
    <property type="match status" value="1"/>
</dbReference>
<comment type="function">
    <text evidence="4 5 6 7">Sigma factors are initiation factors that promote the attachment of RNA polymerase to specific initiation sites and are then released. This sigma factor is involved in regulation of cell wall metabolism in response to heat stress. Acts by regulating the expression of genes such as bcrC, mreBH and lytE (PubMed:18156261, PubMed:21541672, PubMed:23199363). Also plays a role in survival at low temperatures (PubMed:19114499).</text>
</comment>
<comment type="activity regulation">
    <text evidence="3">Negatively regulated by the anti-sigma-I factor RsgI. Upon exposure to heat, SigI is released from RsgI and activated. Transient heat activation of SigI may depend upon DnaK chaperone.</text>
</comment>
<comment type="subunit">
    <text evidence="1 3">Interacts with RsgI.</text>
</comment>
<comment type="subcellular location">
    <subcellularLocation>
        <location evidence="1 10">Cytoplasm</location>
    </subcellularLocation>
</comment>
<comment type="induction">
    <text evidence="2 3 7 8">Part of the sigI-rsgI operon, which is transiently induced by heat stress. Expression is positively autoregulated via the sigma-I promoter (PubMed:11157964, PubMed:17185538). In exponentially growing cells, expression is regulated by the WalRK two-component system, which represses the sigma-I promoter and activates the sigma-A promoter, leading to the formation of a basal level of SigI (PubMed:23199363). WalRK can also positively and directly regulate transcription of the operon under heat stress through a binding site located upstream of the sigma-I promoter (PubMed:24125693). Repressed by glucose (PubMed:17185538).</text>
</comment>
<comment type="disruption phenotype">
    <text evidence="2 5">Cells lacking this gene exhibit normal cell morphology and growth rate at 37 degrees Celsius, but cannot grow at high temperature.</text>
</comment>
<comment type="similarity">
    <text evidence="1 10">Belongs to the sigma-70 factor family. SigI subfamily.</text>
</comment>
<gene>
    <name evidence="1 9" type="primary">sigI</name>
    <name type="synonym">ykoZ</name>
    <name type="ordered locus">BSU13450</name>
</gene>
<protein>
    <recommendedName>
        <fullName evidence="1 10">RNA polymerase sigma factor SigI</fullName>
    </recommendedName>
</protein>
<name>SIGI_BACSU</name>
<organism>
    <name type="scientific">Bacillus subtilis (strain 168)</name>
    <dbReference type="NCBI Taxonomy" id="224308"/>
    <lineage>
        <taxon>Bacteria</taxon>
        <taxon>Bacillati</taxon>
        <taxon>Bacillota</taxon>
        <taxon>Bacilli</taxon>
        <taxon>Bacillales</taxon>
        <taxon>Bacillaceae</taxon>
        <taxon>Bacillus</taxon>
    </lineage>
</organism>
<keyword id="KW-0963">Cytoplasm</keyword>
<keyword id="KW-0238">DNA-binding</keyword>
<keyword id="KW-1185">Reference proteome</keyword>
<keyword id="KW-0731">Sigma factor</keyword>
<keyword id="KW-0346">Stress response</keyword>
<keyword id="KW-0804">Transcription</keyword>
<keyword id="KW-0805">Transcription regulation</keyword>
<reference key="1">
    <citation type="journal article" date="1997" name="Nature">
        <title>The complete genome sequence of the Gram-positive bacterium Bacillus subtilis.</title>
        <authorList>
            <person name="Kunst F."/>
            <person name="Ogasawara N."/>
            <person name="Moszer I."/>
            <person name="Albertini A.M."/>
            <person name="Alloni G."/>
            <person name="Azevedo V."/>
            <person name="Bertero M.G."/>
            <person name="Bessieres P."/>
            <person name="Bolotin A."/>
            <person name="Borchert S."/>
            <person name="Borriss R."/>
            <person name="Boursier L."/>
            <person name="Brans A."/>
            <person name="Braun M."/>
            <person name="Brignell S.C."/>
            <person name="Bron S."/>
            <person name="Brouillet S."/>
            <person name="Bruschi C.V."/>
            <person name="Caldwell B."/>
            <person name="Capuano V."/>
            <person name="Carter N.M."/>
            <person name="Choi S.-K."/>
            <person name="Codani J.-J."/>
            <person name="Connerton I.F."/>
            <person name="Cummings N.J."/>
            <person name="Daniel R.A."/>
            <person name="Denizot F."/>
            <person name="Devine K.M."/>
            <person name="Duesterhoeft A."/>
            <person name="Ehrlich S.D."/>
            <person name="Emmerson P.T."/>
            <person name="Entian K.-D."/>
            <person name="Errington J."/>
            <person name="Fabret C."/>
            <person name="Ferrari E."/>
            <person name="Foulger D."/>
            <person name="Fritz C."/>
            <person name="Fujita M."/>
            <person name="Fujita Y."/>
            <person name="Fuma S."/>
            <person name="Galizzi A."/>
            <person name="Galleron N."/>
            <person name="Ghim S.-Y."/>
            <person name="Glaser P."/>
            <person name="Goffeau A."/>
            <person name="Golightly E.J."/>
            <person name="Grandi G."/>
            <person name="Guiseppi G."/>
            <person name="Guy B.J."/>
            <person name="Haga K."/>
            <person name="Haiech J."/>
            <person name="Harwood C.R."/>
            <person name="Henaut A."/>
            <person name="Hilbert H."/>
            <person name="Holsappel S."/>
            <person name="Hosono S."/>
            <person name="Hullo M.-F."/>
            <person name="Itaya M."/>
            <person name="Jones L.-M."/>
            <person name="Joris B."/>
            <person name="Karamata D."/>
            <person name="Kasahara Y."/>
            <person name="Klaerr-Blanchard M."/>
            <person name="Klein C."/>
            <person name="Kobayashi Y."/>
            <person name="Koetter P."/>
            <person name="Koningstein G."/>
            <person name="Krogh S."/>
            <person name="Kumano M."/>
            <person name="Kurita K."/>
            <person name="Lapidus A."/>
            <person name="Lardinois S."/>
            <person name="Lauber J."/>
            <person name="Lazarevic V."/>
            <person name="Lee S.-M."/>
            <person name="Levine A."/>
            <person name="Liu H."/>
            <person name="Masuda S."/>
            <person name="Mauel C."/>
            <person name="Medigue C."/>
            <person name="Medina N."/>
            <person name="Mellado R.P."/>
            <person name="Mizuno M."/>
            <person name="Moestl D."/>
            <person name="Nakai S."/>
            <person name="Noback M."/>
            <person name="Noone D."/>
            <person name="O'Reilly M."/>
            <person name="Ogawa K."/>
            <person name="Ogiwara A."/>
            <person name="Oudega B."/>
            <person name="Park S.-H."/>
            <person name="Parro V."/>
            <person name="Pohl T.M."/>
            <person name="Portetelle D."/>
            <person name="Porwollik S."/>
            <person name="Prescott A.M."/>
            <person name="Presecan E."/>
            <person name="Pujic P."/>
            <person name="Purnelle B."/>
            <person name="Rapoport G."/>
            <person name="Rey M."/>
            <person name="Reynolds S."/>
            <person name="Rieger M."/>
            <person name="Rivolta C."/>
            <person name="Rocha E."/>
            <person name="Roche B."/>
            <person name="Rose M."/>
            <person name="Sadaie Y."/>
            <person name="Sato T."/>
            <person name="Scanlan E."/>
            <person name="Schleich S."/>
            <person name="Schroeter R."/>
            <person name="Scoffone F."/>
            <person name="Sekiguchi J."/>
            <person name="Sekowska A."/>
            <person name="Seror S.J."/>
            <person name="Serror P."/>
            <person name="Shin B.-S."/>
            <person name="Soldo B."/>
            <person name="Sorokin A."/>
            <person name="Tacconi E."/>
            <person name="Takagi T."/>
            <person name="Takahashi H."/>
            <person name="Takemaru K."/>
            <person name="Takeuchi M."/>
            <person name="Tamakoshi A."/>
            <person name="Tanaka T."/>
            <person name="Terpstra P."/>
            <person name="Tognoni A."/>
            <person name="Tosato V."/>
            <person name="Uchiyama S."/>
            <person name="Vandenbol M."/>
            <person name="Vannier F."/>
            <person name="Vassarotti A."/>
            <person name="Viari A."/>
            <person name="Wambutt R."/>
            <person name="Wedler E."/>
            <person name="Wedler H."/>
            <person name="Weitzenegger T."/>
            <person name="Winters P."/>
            <person name="Wipat A."/>
            <person name="Yamamoto H."/>
            <person name="Yamane K."/>
            <person name="Yasumoto K."/>
            <person name="Yata K."/>
            <person name="Yoshida K."/>
            <person name="Yoshikawa H.-F."/>
            <person name="Zumstein E."/>
            <person name="Yoshikawa H."/>
            <person name="Danchin A."/>
        </authorList>
    </citation>
    <scope>NUCLEOTIDE SEQUENCE [LARGE SCALE GENOMIC DNA]</scope>
    <source>
        <strain>168</strain>
    </source>
</reference>
<reference key="2">
    <citation type="journal article" date="2001" name="J. Bacteriol.">
        <title>Putative sigma factor sigI (ykoZ) of Bacillus subtilis is induced by heat shock.</title>
        <authorList>
            <person name="Zuber U."/>
            <person name="Drzewiecki K."/>
            <person name="Hecker M."/>
        </authorList>
    </citation>
    <scope>INDUCTION</scope>
    <scope>DISRUPTION PHENOTYPE</scope>
    <source>
        <strain>168</strain>
    </source>
</reference>
<reference key="3">
    <citation type="journal article" date="2007" name="Microbiology">
        <title>Regulatory role of rsgI in sigI expression in Bacillus subtilis.</title>
        <authorList>
            <person name="Asai K."/>
            <person name="Ootsuji T."/>
            <person name="Obata K."/>
            <person name="Matsumoto T."/>
            <person name="Fujita Y."/>
            <person name="Sadaie Y."/>
        </authorList>
    </citation>
    <scope>INDUCTION</scope>
    <scope>ACTIVITY REGULATION</scope>
    <scope>INTERACTION WITH RSGI</scope>
    <source>
        <strain>168</strain>
    </source>
</reference>
<reference key="4">
    <citation type="journal article" date="2008" name="J. Bacteriol.">
        <title>Genetic evidence for the actin homolog gene mreBH and the bacitracin resistance gene bcrC as targets of the alternative sigma factor sigI of Bacillus subtilis.</title>
        <authorList>
            <person name="Tseng C.-L."/>
            <person name="Shaw G.-C."/>
        </authorList>
    </citation>
    <scope>PROBABLE FUNCTION IN HEAT SHOCK RESPONSE</scope>
    <source>
        <strain>168</strain>
    </source>
</reference>
<reference key="5">
    <citation type="journal article" date="2009" name="J. Bacteriol.">
        <title>The cell wall regulator sigmaI specifically suppresses the lethal phenotype of mbl mutants in Bacillus subtilis.</title>
        <authorList>
            <person name="Schirner K."/>
            <person name="Errington J."/>
        </authorList>
    </citation>
    <scope>FUNCTION IN COLD STRESS RESPONSE</scope>
    <scope>DISRUPTION PHENOTYPE</scope>
    <source>
        <strain>168</strain>
    </source>
</reference>
<reference key="6">
    <citation type="journal article" date="2011" name="Arch. Microbiol.">
        <title>Genetic evidence for involvement of the alternative sigma factor SigI in controlling expression of the cell wall hydrolase gene lytE and contribution of LytE to heat survival of Bacillus subtilis.</title>
        <authorList>
            <person name="Tseng C.L."/>
            <person name="Chen J.T."/>
            <person name="Lin J.H."/>
            <person name="Huang W.Z."/>
            <person name="Shaw G.C."/>
        </authorList>
    </citation>
    <scope>FUNCTION</scope>
    <source>
        <strain>168</strain>
    </source>
</reference>
<reference key="7">
    <citation type="journal article" date="2013" name="Mol. Microbiol.">
        <title>The WalRK (YycFG) and sigma(I) RsgI regulators cooperate to control CwlO and LytE expression in exponentially growing and stressed Bacillus subtilis cells.</title>
        <authorList>
            <person name="Salzberg L.I."/>
            <person name="Powell L."/>
            <person name="Hokamp K."/>
            <person name="Botella E."/>
            <person name="Noone D."/>
            <person name="Devine K.M."/>
        </authorList>
    </citation>
    <scope>FUNCTION</scope>
    <scope>INDUCTION</scope>
</reference>
<reference key="8">
    <citation type="journal article" date="2013" name="Res. Microbiol.">
        <title>The heat-inducible essential response regulator WalR positively regulates transcription of sigI, mreBH and lytE in Bacillus subtilis under heat stress.</title>
        <authorList>
            <person name="Huang W.Z."/>
            <person name="Wang J.J."/>
            <person name="Chen H.J."/>
            <person name="Chen J.T."/>
            <person name="Shaw G.C."/>
        </authorList>
    </citation>
    <scope>INDUCTION</scope>
</reference>
<sequence>MKPVLSLLFKLGKKKQTLEKAVESIQKGNKDLQNELIQQYKPFIAKTVSSVCKRYIDEKDDEFSIGLIAFNEAIEKYSPEKGNSLLAFAELIIKRKVIDYIRKEARSAQNINIDLQEGDDQESSQSLIEAELSIDEYRRQIEQEQRREEILYFQKQLKDYGLSFKELLENSPKHTDARQNAIKVAMTLVEHEELAAILYTKKQLPVKQLEQLVSVSRKTIERNRKYIIAMCIIITGDYIYLKDYLKGVLHS</sequence>
<proteinExistence type="evidence at protein level"/>
<accession>O31654</accession>
<evidence type="ECO:0000255" key="1">
    <source>
        <dbReference type="HAMAP-Rule" id="MF_02064"/>
    </source>
</evidence>
<evidence type="ECO:0000269" key="2">
    <source>
    </source>
</evidence>
<evidence type="ECO:0000269" key="3">
    <source>
    </source>
</evidence>
<evidence type="ECO:0000269" key="4">
    <source>
    </source>
</evidence>
<evidence type="ECO:0000269" key="5">
    <source>
    </source>
</evidence>
<evidence type="ECO:0000269" key="6">
    <source>
    </source>
</evidence>
<evidence type="ECO:0000269" key="7">
    <source>
    </source>
</evidence>
<evidence type="ECO:0000269" key="8">
    <source>
    </source>
</evidence>
<evidence type="ECO:0000303" key="9">
    <source>
    </source>
</evidence>
<evidence type="ECO:0000305" key="10"/>
<feature type="chain" id="PRO_0000379970" description="RNA polymerase sigma factor SigI">
    <location>
        <begin position="1"/>
        <end position="251"/>
    </location>
</feature>
<feature type="DNA-binding region" description="H-T-H motif" evidence="1 10">
    <location>
        <begin position="206"/>
        <end position="225"/>
    </location>
</feature>
<feature type="short sequence motif" description="Polymerase core binding" evidence="1 10">
    <location>
        <begin position="61"/>
        <end position="74"/>
    </location>
</feature>